<reference key="1">
    <citation type="submission" date="2005-11" db="EMBL/GenBank/DDBJ databases">
        <title>Identification of the Bacillus megaterium dinR locus.</title>
        <authorList>
            <person name="Nahrstedt H."/>
            <person name="Meinhardt F."/>
        </authorList>
    </citation>
    <scope>NUCLEOTIDE SEQUENCE [GENOMIC DNA]</scope>
</reference>
<reference key="2">
    <citation type="journal article" date="2011" name="J. Bacteriol.">
        <title>Genome sequences of the biotechnologically important Bacillus megaterium strains QM B1551 and DSM319.</title>
        <authorList>
            <person name="Eppinger M."/>
            <person name="Bunk B."/>
            <person name="Johns M.A."/>
            <person name="Edirisinghe J.N."/>
            <person name="Kutumbaka K.K."/>
            <person name="Koenig S.S."/>
            <person name="Creasy H.H."/>
            <person name="Rosovitz M.J."/>
            <person name="Riley D.R."/>
            <person name="Daugherty S."/>
            <person name="Martin M."/>
            <person name="Elbourne L.D."/>
            <person name="Paulsen I."/>
            <person name="Biedendieck R."/>
            <person name="Braun C."/>
            <person name="Grayburn S."/>
            <person name="Dhingra S."/>
            <person name="Lukyanchuk V."/>
            <person name="Ball B."/>
            <person name="Ul-Qamar R."/>
            <person name="Seibel J."/>
            <person name="Bremer E."/>
            <person name="Jahn D."/>
            <person name="Ravel J."/>
            <person name="Vary P.S."/>
        </authorList>
    </citation>
    <scope>NUCLEOTIDE SEQUENCE [LARGE SCALE GENOMIC DNA]</scope>
    <source>
        <strain>DSM 319 / IMG 1521</strain>
    </source>
</reference>
<protein>
    <recommendedName>
        <fullName evidence="1">Cell division suppressor protein YneA</fullName>
    </recommendedName>
</protein>
<gene>
    <name evidence="1" type="primary">yneA</name>
    <name type="ordered locus">BMD_4076</name>
</gene>
<dbReference type="EMBL" id="AJ634464">
    <property type="protein sequence ID" value="CAG24076.1"/>
    <property type="molecule type" value="Genomic_DNA"/>
</dbReference>
<dbReference type="EMBL" id="CP001982">
    <property type="protein sequence ID" value="ADF40906.1"/>
    <property type="molecule type" value="Genomic_DNA"/>
</dbReference>
<dbReference type="RefSeq" id="WP_013084723.1">
    <property type="nucleotide sequence ID" value="NC_014103.1"/>
</dbReference>
<dbReference type="SMR" id="Q5ZNC8"/>
<dbReference type="KEGG" id="bmd:BMD_4076"/>
<dbReference type="HOGENOM" id="CLU_136034_4_0_9"/>
<dbReference type="Proteomes" id="UP000002365">
    <property type="component" value="Chromosome"/>
</dbReference>
<dbReference type="GO" id="GO:0005737">
    <property type="term" value="C:cytoplasm"/>
    <property type="evidence" value="ECO:0007669"/>
    <property type="project" value="UniProtKB-SubCell"/>
</dbReference>
<dbReference type="GO" id="GO:0000917">
    <property type="term" value="P:division septum assembly"/>
    <property type="evidence" value="ECO:0007669"/>
    <property type="project" value="UniProtKB-KW"/>
</dbReference>
<dbReference type="GO" id="GO:0006281">
    <property type="term" value="P:DNA repair"/>
    <property type="evidence" value="ECO:0007669"/>
    <property type="project" value="UniProtKB-KW"/>
</dbReference>
<dbReference type="GO" id="GO:0051782">
    <property type="term" value="P:negative regulation of cell division"/>
    <property type="evidence" value="ECO:0007669"/>
    <property type="project" value="UniProtKB-UniRule"/>
</dbReference>
<dbReference type="GO" id="GO:0009432">
    <property type="term" value="P:SOS response"/>
    <property type="evidence" value="ECO:0007669"/>
    <property type="project" value="UniProtKB-UniRule"/>
</dbReference>
<dbReference type="CDD" id="cd00118">
    <property type="entry name" value="LysM"/>
    <property type="match status" value="1"/>
</dbReference>
<dbReference type="Gene3D" id="3.10.350.10">
    <property type="entry name" value="LysM domain"/>
    <property type="match status" value="1"/>
</dbReference>
<dbReference type="HAMAP" id="MF_02014">
    <property type="entry name" value="YneA"/>
    <property type="match status" value="1"/>
</dbReference>
<dbReference type="InterPro" id="IPR022887">
    <property type="entry name" value="Cell_div_suppressor_YneA"/>
</dbReference>
<dbReference type="InterPro" id="IPR018392">
    <property type="entry name" value="LysM_dom"/>
</dbReference>
<dbReference type="InterPro" id="IPR036779">
    <property type="entry name" value="LysM_dom_sf"/>
</dbReference>
<dbReference type="NCBIfam" id="NF010723">
    <property type="entry name" value="PRK14125.1"/>
    <property type="match status" value="1"/>
</dbReference>
<dbReference type="Pfam" id="PF01476">
    <property type="entry name" value="LysM"/>
    <property type="match status" value="1"/>
</dbReference>
<dbReference type="PROSITE" id="PS51782">
    <property type="entry name" value="LYSM"/>
    <property type="match status" value="1"/>
</dbReference>
<organism>
    <name type="scientific">Priestia megaterium (strain DSM 319 / IMG 1521)</name>
    <name type="common">Bacillus megaterium</name>
    <dbReference type="NCBI Taxonomy" id="592022"/>
    <lineage>
        <taxon>Bacteria</taxon>
        <taxon>Bacillati</taxon>
        <taxon>Bacillota</taxon>
        <taxon>Bacilli</taxon>
        <taxon>Bacillales</taxon>
        <taxon>Bacillaceae</taxon>
        <taxon>Priestia</taxon>
    </lineage>
</organism>
<comment type="function">
    <text evidence="1">Inhibits cell division during the SOS response. Affects a later stage of the cell division protein assembly, after the assembly of the Z ring, by probably suppressing recruitment of FtsL and/or DivIC to the division machinery.</text>
</comment>
<comment type="subcellular location">
    <subcellularLocation>
        <location evidence="1">Cytoplasm</location>
    </subcellularLocation>
</comment>
<comment type="similarity">
    <text evidence="1">Belongs to the YneA family.</text>
</comment>
<name>YNEA_PRIM3</name>
<accession>Q5ZNC8</accession>
<accession>D5DKR0</accession>
<evidence type="ECO:0000255" key="1">
    <source>
        <dbReference type="HAMAP-Rule" id="MF_02014"/>
    </source>
</evidence>
<evidence type="ECO:0000255" key="2">
    <source>
        <dbReference type="PROSITE-ProRule" id="PRU01118"/>
    </source>
</evidence>
<keyword id="KW-0131">Cell cycle</keyword>
<keyword id="KW-0132">Cell division</keyword>
<keyword id="KW-0963">Cytoplasm</keyword>
<keyword id="KW-0227">DNA damage</keyword>
<keyword id="KW-0234">DNA repair</keyword>
<keyword id="KW-0717">Septation</keyword>
<keyword id="KW-0742">SOS response</keyword>
<feature type="chain" id="PRO_0000346639" description="Cell division suppressor protein YneA">
    <location>
        <begin position="1"/>
        <end position="109"/>
    </location>
</feature>
<feature type="domain" description="LysM" evidence="2">
    <location>
        <begin position="40"/>
        <end position="94"/>
    </location>
</feature>
<sequence length="109" mass="12499">MQQFLHSMKHYAIFFAVIAALTYVLTLVLGADKVDLDKYSTVTITKGDTLWELSNKYHNHHHLTTNEFVKWVEDVNDLNSDTAQSLSPGDKLYIPVLKKELHNQVAIEQ</sequence>
<proteinExistence type="inferred from homology"/>